<name>CIAO1_CRYNB</name>
<organism>
    <name type="scientific">Cryptococcus neoformans var. neoformans serotype D (strain B-3501A)</name>
    <name type="common">Filobasidiella neoformans</name>
    <dbReference type="NCBI Taxonomy" id="283643"/>
    <lineage>
        <taxon>Eukaryota</taxon>
        <taxon>Fungi</taxon>
        <taxon>Dikarya</taxon>
        <taxon>Basidiomycota</taxon>
        <taxon>Agaricomycotina</taxon>
        <taxon>Tremellomycetes</taxon>
        <taxon>Tremellales</taxon>
        <taxon>Cryptococcaceae</taxon>
        <taxon>Cryptococcus</taxon>
        <taxon>Cryptococcus neoformans species complex</taxon>
    </lineage>
</organism>
<keyword id="KW-0677">Repeat</keyword>
<keyword id="KW-0853">WD repeat</keyword>
<gene>
    <name evidence="1" type="primary">CIA1</name>
    <name type="ordered locus">CNBJ0220</name>
</gene>
<proteinExistence type="inferred from homology"/>
<feature type="chain" id="PRO_0000410328" description="Probable cytosolic iron-sulfur protein assembly protein 1">
    <location>
        <begin position="1"/>
        <end position="440"/>
    </location>
</feature>
<feature type="repeat" description="WD 1">
    <location>
        <begin position="12"/>
        <end position="51"/>
    </location>
</feature>
<feature type="repeat" description="WD 2">
    <location>
        <begin position="71"/>
        <end position="110"/>
    </location>
</feature>
<feature type="repeat" description="WD 3">
    <location>
        <begin position="148"/>
        <end position="187"/>
    </location>
</feature>
<feature type="repeat" description="WD 4">
    <location>
        <begin position="193"/>
        <end position="233"/>
    </location>
</feature>
<feature type="repeat" description="WD 5">
    <location>
        <begin position="278"/>
        <end position="317"/>
    </location>
</feature>
<feature type="repeat" description="WD 6">
    <location>
        <begin position="326"/>
        <end position="379"/>
    </location>
</feature>
<feature type="repeat" description="WD 7">
    <location>
        <begin position="401"/>
        <end position="440"/>
    </location>
</feature>
<feature type="region of interest" description="Disordered" evidence="2">
    <location>
        <begin position="107"/>
        <end position="137"/>
    </location>
</feature>
<feature type="compositionally biased region" description="Acidic residues" evidence="2">
    <location>
        <begin position="107"/>
        <end position="116"/>
    </location>
</feature>
<evidence type="ECO:0000255" key="1">
    <source>
        <dbReference type="HAMAP-Rule" id="MF_03037"/>
    </source>
</evidence>
<evidence type="ECO:0000256" key="2">
    <source>
        <dbReference type="SAM" id="MobiDB-lite"/>
    </source>
</evidence>
<protein>
    <recommendedName>
        <fullName evidence="1">Probable cytosolic iron-sulfur protein assembly protein 1</fullName>
    </recommendedName>
</protein>
<dbReference type="EMBL" id="AAEY01000048">
    <property type="protein sequence ID" value="EAL18596.1"/>
    <property type="molecule type" value="Genomic_DNA"/>
</dbReference>
<dbReference type="RefSeq" id="XP_773243.1">
    <property type="nucleotide sequence ID" value="XM_768150.1"/>
</dbReference>
<dbReference type="SMR" id="P0CS31"/>
<dbReference type="EnsemblFungi" id="AAW45887">
    <property type="protein sequence ID" value="AAW45887"/>
    <property type="gene ID" value="CNJ03240"/>
</dbReference>
<dbReference type="GeneID" id="4938353"/>
<dbReference type="KEGG" id="cnb:CNBJ0220"/>
<dbReference type="VEuPathDB" id="FungiDB:CNBJ0220"/>
<dbReference type="HOGENOM" id="CLU_000288_57_8_1"/>
<dbReference type="OrthoDB" id="3132at5206"/>
<dbReference type="GO" id="GO:0097361">
    <property type="term" value="C:cytosolic [4Fe-4S] assembly targeting complex"/>
    <property type="evidence" value="ECO:0007669"/>
    <property type="project" value="InterPro"/>
</dbReference>
<dbReference type="GO" id="GO:0016226">
    <property type="term" value="P:iron-sulfur cluster assembly"/>
    <property type="evidence" value="ECO:0007669"/>
    <property type="project" value="UniProtKB-UniRule"/>
</dbReference>
<dbReference type="CDD" id="cd00200">
    <property type="entry name" value="WD40"/>
    <property type="match status" value="1"/>
</dbReference>
<dbReference type="Gene3D" id="2.130.10.10">
    <property type="entry name" value="YVTN repeat-like/Quinoprotein amine dehydrogenase"/>
    <property type="match status" value="2"/>
</dbReference>
<dbReference type="HAMAP" id="MF_03037">
    <property type="entry name" value="ciao1"/>
    <property type="match status" value="1"/>
</dbReference>
<dbReference type="InterPro" id="IPR028608">
    <property type="entry name" value="CIAO1/Cia1"/>
</dbReference>
<dbReference type="InterPro" id="IPR020472">
    <property type="entry name" value="G-protein_beta_WD-40_rep"/>
</dbReference>
<dbReference type="InterPro" id="IPR015943">
    <property type="entry name" value="WD40/YVTN_repeat-like_dom_sf"/>
</dbReference>
<dbReference type="InterPro" id="IPR019775">
    <property type="entry name" value="WD40_repeat_CS"/>
</dbReference>
<dbReference type="InterPro" id="IPR036322">
    <property type="entry name" value="WD40_repeat_dom_sf"/>
</dbReference>
<dbReference type="InterPro" id="IPR001680">
    <property type="entry name" value="WD40_rpt"/>
</dbReference>
<dbReference type="PANTHER" id="PTHR19920:SF0">
    <property type="entry name" value="CYTOSOLIC IRON-SULFUR PROTEIN ASSEMBLY PROTEIN CIAO1-RELATED"/>
    <property type="match status" value="1"/>
</dbReference>
<dbReference type="PANTHER" id="PTHR19920">
    <property type="entry name" value="WD40 PROTEIN CIAO1"/>
    <property type="match status" value="1"/>
</dbReference>
<dbReference type="Pfam" id="PF00400">
    <property type="entry name" value="WD40"/>
    <property type="match status" value="7"/>
</dbReference>
<dbReference type="PRINTS" id="PR00320">
    <property type="entry name" value="GPROTEINBRPT"/>
</dbReference>
<dbReference type="SMART" id="SM00320">
    <property type="entry name" value="WD40"/>
    <property type="match status" value="7"/>
</dbReference>
<dbReference type="SUPFAM" id="SSF50978">
    <property type="entry name" value="WD40 repeat-like"/>
    <property type="match status" value="1"/>
</dbReference>
<dbReference type="PROSITE" id="PS00678">
    <property type="entry name" value="WD_REPEATS_1"/>
    <property type="match status" value="1"/>
</dbReference>
<dbReference type="PROSITE" id="PS50082">
    <property type="entry name" value="WD_REPEATS_2"/>
    <property type="match status" value="6"/>
</dbReference>
<dbReference type="PROSITE" id="PS50294">
    <property type="entry name" value="WD_REPEATS_REGION"/>
    <property type="match status" value="1"/>
</dbReference>
<comment type="function">
    <text evidence="1">Essential component of the cytosolic iron-sulfur (Fe/S) protein assembly machinery. Required for the maturation of extramitochondrial Fe/S proteins.</text>
</comment>
<comment type="similarity">
    <text evidence="1">Belongs to the WD repeat CIA1 family.</text>
</comment>
<reference key="1">
    <citation type="journal article" date="2005" name="Science">
        <title>The genome of the basidiomycetous yeast and human pathogen Cryptococcus neoformans.</title>
        <authorList>
            <person name="Loftus B.J."/>
            <person name="Fung E."/>
            <person name="Roncaglia P."/>
            <person name="Rowley D."/>
            <person name="Amedeo P."/>
            <person name="Bruno D."/>
            <person name="Vamathevan J."/>
            <person name="Miranda M."/>
            <person name="Anderson I.J."/>
            <person name="Fraser J.A."/>
            <person name="Allen J.E."/>
            <person name="Bosdet I.E."/>
            <person name="Brent M.R."/>
            <person name="Chiu R."/>
            <person name="Doering T.L."/>
            <person name="Donlin M.J."/>
            <person name="D'Souza C.A."/>
            <person name="Fox D.S."/>
            <person name="Grinberg V."/>
            <person name="Fu J."/>
            <person name="Fukushima M."/>
            <person name="Haas B.J."/>
            <person name="Huang J.C."/>
            <person name="Janbon G."/>
            <person name="Jones S.J.M."/>
            <person name="Koo H.L."/>
            <person name="Krzywinski M.I."/>
            <person name="Kwon-Chung K.J."/>
            <person name="Lengeler K.B."/>
            <person name="Maiti R."/>
            <person name="Marra M.A."/>
            <person name="Marra R.E."/>
            <person name="Mathewson C.A."/>
            <person name="Mitchell T.G."/>
            <person name="Pertea M."/>
            <person name="Riggs F.R."/>
            <person name="Salzberg S.L."/>
            <person name="Schein J.E."/>
            <person name="Shvartsbeyn A."/>
            <person name="Shin H."/>
            <person name="Shumway M."/>
            <person name="Specht C.A."/>
            <person name="Suh B.B."/>
            <person name="Tenney A."/>
            <person name="Utterback T.R."/>
            <person name="Wickes B.L."/>
            <person name="Wortman J.R."/>
            <person name="Wye N.H."/>
            <person name="Kronstad J.W."/>
            <person name="Lodge J.K."/>
            <person name="Heitman J."/>
            <person name="Davis R.W."/>
            <person name="Fraser C.M."/>
            <person name="Hyman R.W."/>
        </authorList>
    </citation>
    <scope>NUCLEOTIDE SEQUENCE [LARGE SCALE GENOMIC DNA]</scope>
    <source>
        <strain>B-3501A</strain>
    </source>
</reference>
<sequence length="440" mass="47874">MLRLQSLGSLPAHAEPAWTVSFNPTRSLLASCSTDRTIRLYSYIIPSSSDGLPSQDDSQAVFSLAKVIETDHKRTVRSIAWSPDGRTLASGSFDSTVGVWEEVIPLSDDEEEEDEGAQGVYKPAGVDSDGDGDGGKEKEWECVTTLEGHESECKSVGFSSDGALLASCSRDKSVWVWEVQPDADFECIAVMMEHSQDVKSIAWHPHEEILASASYDSYIHLAYDDPDSDWCIFQKLHPSLPSTPLTIPSTSPSHLIDALVPTEEEKKAEAELQVPPLEEDETVWCLAWSPDGRWLASGGDNGGIRLWQRTGSQPDSAFKEILHTAAHSRSVFSLSWSPPYPSAESAGSTDSTDLGMLASAGEDGKIIIWQITVPPSPSSASQEIDNEQISIRPIAAQKDAHGVNDINSVAWCVREDKKGWGMLSSAGDDGSVKVWRVVRD</sequence>
<accession>P0CS31</accession>
<accession>Q55LG3</accession>
<accession>Q5KA32</accession>